<feature type="chain" id="PRO_0000237604" description="Probable fructokinase-4">
    <location>
        <begin position="1"/>
        <end position="326"/>
    </location>
</feature>
<feature type="sequence conflict" description="In Ref. 4; AAM64445." evidence="2" ref="4">
    <original>R</original>
    <variation>S</variation>
    <location>
        <position position="241"/>
    </location>
</feature>
<feature type="sequence conflict" description="In Ref. 4; AAM64445." evidence="2" ref="4">
    <original>L</original>
    <variation>F</variation>
    <location>
        <position position="295"/>
    </location>
</feature>
<evidence type="ECO:0000250" key="1">
    <source>
        <dbReference type="UniProtKB" id="Q6XZ79"/>
    </source>
</evidence>
<evidence type="ECO:0000305" key="2"/>
<evidence type="ECO:0000312" key="3">
    <source>
        <dbReference type="Araport" id="AT3G59480"/>
    </source>
</evidence>
<evidence type="ECO:0000312" key="4">
    <source>
        <dbReference type="EMBL" id="CAB75445.1"/>
    </source>
</evidence>
<keyword id="KW-0067">ATP-binding</keyword>
<keyword id="KW-0119">Carbohydrate metabolism</keyword>
<keyword id="KW-0418">Kinase</keyword>
<keyword id="KW-0547">Nucleotide-binding</keyword>
<keyword id="KW-1185">Reference proteome</keyword>
<keyword id="KW-0808">Transferase</keyword>
<organism>
    <name type="scientific">Arabidopsis thaliana</name>
    <name type="common">Mouse-ear cress</name>
    <dbReference type="NCBI Taxonomy" id="3702"/>
    <lineage>
        <taxon>Eukaryota</taxon>
        <taxon>Viridiplantae</taxon>
        <taxon>Streptophyta</taxon>
        <taxon>Embryophyta</taxon>
        <taxon>Tracheophyta</taxon>
        <taxon>Spermatophyta</taxon>
        <taxon>Magnoliopsida</taxon>
        <taxon>eudicotyledons</taxon>
        <taxon>Gunneridae</taxon>
        <taxon>Pentapetalae</taxon>
        <taxon>rosids</taxon>
        <taxon>malvids</taxon>
        <taxon>Brassicales</taxon>
        <taxon>Brassicaceae</taxon>
        <taxon>Camelineae</taxon>
        <taxon>Arabidopsis</taxon>
    </lineage>
</organism>
<comment type="function">
    <text evidence="1">May play an important role in maintaining the flux of carbon towards starch formation.</text>
</comment>
<comment type="catalytic activity">
    <reaction>
        <text>D-fructose + ATP = D-fructose 6-phosphate + ADP + H(+)</text>
        <dbReference type="Rhea" id="RHEA:16125"/>
        <dbReference type="ChEBI" id="CHEBI:15378"/>
        <dbReference type="ChEBI" id="CHEBI:30616"/>
        <dbReference type="ChEBI" id="CHEBI:37721"/>
        <dbReference type="ChEBI" id="CHEBI:61527"/>
        <dbReference type="ChEBI" id="CHEBI:456216"/>
        <dbReference type="EC" id="2.7.1.4"/>
    </reaction>
</comment>
<comment type="pathway">
    <text>Glycan biosynthesis; starch biosynthesis.</text>
</comment>
<comment type="similarity">
    <text evidence="2">Belongs to the carbohydrate kinase PfkB family.</text>
</comment>
<proteinExistence type="evidence at transcript level"/>
<dbReference type="EC" id="2.7.1.4"/>
<dbReference type="EMBL" id="AL138659">
    <property type="protein sequence ID" value="CAB75445.1"/>
    <property type="molecule type" value="Genomic_DNA"/>
</dbReference>
<dbReference type="EMBL" id="CP002686">
    <property type="protein sequence ID" value="AEE79930.1"/>
    <property type="molecule type" value="Genomic_DNA"/>
</dbReference>
<dbReference type="EMBL" id="BT028928">
    <property type="protein sequence ID" value="ABI49475.1"/>
    <property type="molecule type" value="mRNA"/>
</dbReference>
<dbReference type="EMBL" id="AY086378">
    <property type="protein sequence ID" value="AAM64445.1"/>
    <property type="molecule type" value="mRNA"/>
</dbReference>
<dbReference type="PIR" id="T49289">
    <property type="entry name" value="T49289"/>
</dbReference>
<dbReference type="RefSeq" id="NP_191507.1">
    <property type="nucleotide sequence ID" value="NM_115810.4"/>
</dbReference>
<dbReference type="SMR" id="Q9M1B9"/>
<dbReference type="BioGRID" id="10432">
    <property type="interactions" value="4"/>
</dbReference>
<dbReference type="FunCoup" id="Q9M1B9">
    <property type="interactions" value="323"/>
</dbReference>
<dbReference type="IntAct" id="Q9M1B9">
    <property type="interactions" value="2"/>
</dbReference>
<dbReference type="STRING" id="3702.Q9M1B9"/>
<dbReference type="PaxDb" id="3702-AT3G59480.1"/>
<dbReference type="ProteomicsDB" id="232774"/>
<dbReference type="EnsemblPlants" id="AT3G59480.1">
    <property type="protein sequence ID" value="AT3G59480.1"/>
    <property type="gene ID" value="AT3G59480"/>
</dbReference>
<dbReference type="GeneID" id="825117"/>
<dbReference type="Gramene" id="AT3G59480.1">
    <property type="protein sequence ID" value="AT3G59480.1"/>
    <property type="gene ID" value="AT3G59480"/>
</dbReference>
<dbReference type="KEGG" id="ath:AT3G59480"/>
<dbReference type="Araport" id="AT3G59480"/>
<dbReference type="TAIR" id="AT3G59480">
    <property type="gene designation" value="FRK7"/>
</dbReference>
<dbReference type="eggNOG" id="KOG2855">
    <property type="taxonomic scope" value="Eukaryota"/>
</dbReference>
<dbReference type="HOGENOM" id="CLU_027634_6_1_1"/>
<dbReference type="InParanoid" id="Q9M1B9"/>
<dbReference type="OMA" id="CANFMPT"/>
<dbReference type="OrthoDB" id="415590at2759"/>
<dbReference type="PhylomeDB" id="Q9M1B9"/>
<dbReference type="BioCyc" id="ARA:AT3G59480-MONOMER"/>
<dbReference type="BRENDA" id="2.7.1.4">
    <property type="organism ID" value="399"/>
</dbReference>
<dbReference type="UniPathway" id="UPA00152"/>
<dbReference type="PRO" id="PR:Q9M1B9"/>
<dbReference type="Proteomes" id="UP000006548">
    <property type="component" value="Chromosome 3"/>
</dbReference>
<dbReference type="ExpressionAtlas" id="Q9M1B9">
    <property type="expression patterns" value="baseline and differential"/>
</dbReference>
<dbReference type="GO" id="GO:0005829">
    <property type="term" value="C:cytosol"/>
    <property type="evidence" value="ECO:0000314"/>
    <property type="project" value="TAIR"/>
</dbReference>
<dbReference type="GO" id="GO:0005524">
    <property type="term" value="F:ATP binding"/>
    <property type="evidence" value="ECO:0007669"/>
    <property type="project" value="UniProtKB-KW"/>
</dbReference>
<dbReference type="GO" id="GO:0008865">
    <property type="term" value="F:fructokinase activity"/>
    <property type="evidence" value="ECO:0000314"/>
    <property type="project" value="TAIR"/>
</dbReference>
<dbReference type="GO" id="GO:0006000">
    <property type="term" value="P:fructose metabolic process"/>
    <property type="evidence" value="ECO:0000314"/>
    <property type="project" value="TAIR"/>
</dbReference>
<dbReference type="GO" id="GO:0019252">
    <property type="term" value="P:starch biosynthetic process"/>
    <property type="evidence" value="ECO:0007669"/>
    <property type="project" value="UniProtKB-UniPathway"/>
</dbReference>
<dbReference type="CDD" id="cd01167">
    <property type="entry name" value="bac_FRK"/>
    <property type="match status" value="1"/>
</dbReference>
<dbReference type="FunFam" id="3.40.1190.20:FF:000005">
    <property type="entry name" value="Probable fructokinase-2"/>
    <property type="match status" value="1"/>
</dbReference>
<dbReference type="Gene3D" id="3.40.1190.20">
    <property type="match status" value="1"/>
</dbReference>
<dbReference type="InterPro" id="IPR002173">
    <property type="entry name" value="Carboh/pur_kinase_PfkB_CS"/>
</dbReference>
<dbReference type="InterPro" id="IPR050306">
    <property type="entry name" value="PfkB_Carbo_kinase"/>
</dbReference>
<dbReference type="InterPro" id="IPR011611">
    <property type="entry name" value="PfkB_dom"/>
</dbReference>
<dbReference type="InterPro" id="IPR002139">
    <property type="entry name" value="Ribo/fructo_kinase"/>
</dbReference>
<dbReference type="InterPro" id="IPR029056">
    <property type="entry name" value="Ribokinase-like"/>
</dbReference>
<dbReference type="PANTHER" id="PTHR43085:SF24">
    <property type="entry name" value="FRUCTOKINASE-4-RELATED"/>
    <property type="match status" value="1"/>
</dbReference>
<dbReference type="PANTHER" id="PTHR43085">
    <property type="entry name" value="HEXOKINASE FAMILY MEMBER"/>
    <property type="match status" value="1"/>
</dbReference>
<dbReference type="Pfam" id="PF00294">
    <property type="entry name" value="PfkB"/>
    <property type="match status" value="1"/>
</dbReference>
<dbReference type="PRINTS" id="PR00990">
    <property type="entry name" value="RIBOKINASE"/>
</dbReference>
<dbReference type="SUPFAM" id="SSF53613">
    <property type="entry name" value="Ribokinase-like"/>
    <property type="match status" value="1"/>
</dbReference>
<dbReference type="PROSITE" id="PS00583">
    <property type="entry name" value="PFKB_KINASES_1"/>
    <property type="match status" value="1"/>
</dbReference>
<dbReference type="PROSITE" id="PS00584">
    <property type="entry name" value="PFKB_KINASES_2"/>
    <property type="match status" value="1"/>
</dbReference>
<name>SCRK4_ARATH</name>
<reference key="1">
    <citation type="journal article" date="2000" name="Nature">
        <title>Sequence and analysis of chromosome 3 of the plant Arabidopsis thaliana.</title>
        <authorList>
            <person name="Salanoubat M."/>
            <person name="Lemcke K."/>
            <person name="Rieger M."/>
            <person name="Ansorge W."/>
            <person name="Unseld M."/>
            <person name="Fartmann B."/>
            <person name="Valle G."/>
            <person name="Bloecker H."/>
            <person name="Perez-Alonso M."/>
            <person name="Obermaier B."/>
            <person name="Delseny M."/>
            <person name="Boutry M."/>
            <person name="Grivell L.A."/>
            <person name="Mache R."/>
            <person name="Puigdomenech P."/>
            <person name="De Simone V."/>
            <person name="Choisne N."/>
            <person name="Artiguenave F."/>
            <person name="Robert C."/>
            <person name="Brottier P."/>
            <person name="Wincker P."/>
            <person name="Cattolico L."/>
            <person name="Weissenbach J."/>
            <person name="Saurin W."/>
            <person name="Quetier F."/>
            <person name="Schaefer M."/>
            <person name="Mueller-Auer S."/>
            <person name="Gabel C."/>
            <person name="Fuchs M."/>
            <person name="Benes V."/>
            <person name="Wurmbach E."/>
            <person name="Drzonek H."/>
            <person name="Erfle H."/>
            <person name="Jordan N."/>
            <person name="Bangert S."/>
            <person name="Wiedelmann R."/>
            <person name="Kranz H."/>
            <person name="Voss H."/>
            <person name="Holland R."/>
            <person name="Brandt P."/>
            <person name="Nyakatura G."/>
            <person name="Vezzi A."/>
            <person name="D'Angelo M."/>
            <person name="Pallavicini A."/>
            <person name="Toppo S."/>
            <person name="Simionati B."/>
            <person name="Conrad A."/>
            <person name="Hornischer K."/>
            <person name="Kauer G."/>
            <person name="Loehnert T.-H."/>
            <person name="Nordsiek G."/>
            <person name="Reichelt J."/>
            <person name="Scharfe M."/>
            <person name="Schoen O."/>
            <person name="Bargues M."/>
            <person name="Terol J."/>
            <person name="Climent J."/>
            <person name="Navarro P."/>
            <person name="Collado C."/>
            <person name="Perez-Perez A."/>
            <person name="Ottenwaelder B."/>
            <person name="Duchemin D."/>
            <person name="Cooke R."/>
            <person name="Laudie M."/>
            <person name="Berger-Llauro C."/>
            <person name="Purnelle B."/>
            <person name="Masuy D."/>
            <person name="de Haan M."/>
            <person name="Maarse A.C."/>
            <person name="Alcaraz J.-P."/>
            <person name="Cottet A."/>
            <person name="Casacuberta E."/>
            <person name="Monfort A."/>
            <person name="Argiriou A."/>
            <person name="Flores M."/>
            <person name="Liguori R."/>
            <person name="Vitale D."/>
            <person name="Mannhaupt G."/>
            <person name="Haase D."/>
            <person name="Schoof H."/>
            <person name="Rudd S."/>
            <person name="Zaccaria P."/>
            <person name="Mewes H.-W."/>
            <person name="Mayer K.F.X."/>
            <person name="Kaul S."/>
            <person name="Town C.D."/>
            <person name="Koo H.L."/>
            <person name="Tallon L.J."/>
            <person name="Jenkins J."/>
            <person name="Rooney T."/>
            <person name="Rizzo M."/>
            <person name="Walts A."/>
            <person name="Utterback T."/>
            <person name="Fujii C.Y."/>
            <person name="Shea T.P."/>
            <person name="Creasy T.H."/>
            <person name="Haas B."/>
            <person name="Maiti R."/>
            <person name="Wu D."/>
            <person name="Peterson J."/>
            <person name="Van Aken S."/>
            <person name="Pai G."/>
            <person name="Militscher J."/>
            <person name="Sellers P."/>
            <person name="Gill J.E."/>
            <person name="Feldblyum T.V."/>
            <person name="Preuss D."/>
            <person name="Lin X."/>
            <person name="Nierman W.C."/>
            <person name="Salzberg S.L."/>
            <person name="White O."/>
            <person name="Venter J.C."/>
            <person name="Fraser C.M."/>
            <person name="Kaneko T."/>
            <person name="Nakamura Y."/>
            <person name="Sato S."/>
            <person name="Kato T."/>
            <person name="Asamizu E."/>
            <person name="Sasamoto S."/>
            <person name="Kimura T."/>
            <person name="Idesawa K."/>
            <person name="Kawashima K."/>
            <person name="Kishida Y."/>
            <person name="Kiyokawa C."/>
            <person name="Kohara M."/>
            <person name="Matsumoto M."/>
            <person name="Matsuno A."/>
            <person name="Muraki A."/>
            <person name="Nakayama S."/>
            <person name="Nakazaki N."/>
            <person name="Shinpo S."/>
            <person name="Takeuchi C."/>
            <person name="Wada T."/>
            <person name="Watanabe A."/>
            <person name="Yamada M."/>
            <person name="Yasuda M."/>
            <person name="Tabata S."/>
        </authorList>
    </citation>
    <scope>NUCLEOTIDE SEQUENCE [LARGE SCALE GENOMIC DNA]</scope>
    <source>
        <strain>cv. Columbia</strain>
    </source>
</reference>
<reference key="2">
    <citation type="journal article" date="2017" name="Plant J.">
        <title>Araport11: a complete reannotation of the Arabidopsis thaliana reference genome.</title>
        <authorList>
            <person name="Cheng C.Y."/>
            <person name="Krishnakumar V."/>
            <person name="Chan A.P."/>
            <person name="Thibaud-Nissen F."/>
            <person name="Schobel S."/>
            <person name="Town C.D."/>
        </authorList>
    </citation>
    <scope>GENOME REANNOTATION</scope>
    <source>
        <strain>cv. Columbia</strain>
    </source>
</reference>
<reference key="3">
    <citation type="submission" date="2006-09" db="EMBL/GenBank/DDBJ databases">
        <title>Arabidopsis ORF clones.</title>
        <authorList>
            <person name="Quinitio C."/>
            <person name="Chen H."/>
            <person name="Kim C.J."/>
            <person name="Shinn P."/>
            <person name="Ecker J.R."/>
        </authorList>
    </citation>
    <scope>NUCLEOTIDE SEQUENCE [LARGE SCALE MRNA]</scope>
    <source>
        <strain>cv. Columbia</strain>
    </source>
</reference>
<reference key="4">
    <citation type="submission" date="2002-03" db="EMBL/GenBank/DDBJ databases">
        <title>Full-length cDNA from Arabidopsis thaliana.</title>
        <authorList>
            <person name="Brover V.V."/>
            <person name="Troukhan M.E."/>
            <person name="Alexandrov N.A."/>
            <person name="Lu Y.-P."/>
            <person name="Flavell R.B."/>
            <person name="Feldmann K.A."/>
        </authorList>
    </citation>
    <scope>NUCLEOTIDE SEQUENCE [LARGE SCALE MRNA]</scope>
</reference>
<accession>Q9M1B9</accession>
<accession>Q0IGJ2</accession>
<accession>Q8LCW0</accession>
<sequence>MAASNGEKSLIVSFGEMLIDFVPTVSGVSLADAPGFIKAPGGAPANVAIAISRLGGRAAFVGKLGDDEFGHMLAGILKQNGVSAEGINFDTGARTALAFVTLRSDGEREFMFYRNPSADMLLRPDELNLDVIRSAKVFHYGSISLIVEPCRSAHLKAMEVAKEAGALLSYDPNLRLPLWPSKEEAQKQILSIWDKAEVIKVSDEELMFLTGSDKVDDETALSLWHSNLKLLLVTLGEKGCRYYTKSFRGSVDPFHVDAVDTTGAGDSFVGALLCKIVDDRAVLEDEARLREVLRLANACGAITTTKKGAIPALPTESEVQSLLKGN</sequence>
<gene>
    <name evidence="3" type="ordered locus">At3g59480</name>
    <name evidence="4" type="ORF">T16L24.30</name>
</gene>
<protein>
    <recommendedName>
        <fullName>Probable fructokinase-4</fullName>
        <ecNumber>2.7.1.4</ecNumber>
    </recommendedName>
</protein>